<feature type="chain" id="PRO_1000057087" description="Adenylosuccinate synthetase">
    <location>
        <begin position="1"/>
        <end position="432"/>
    </location>
</feature>
<feature type="active site" description="Proton acceptor" evidence="1">
    <location>
        <position position="14"/>
    </location>
</feature>
<feature type="active site" description="Proton donor" evidence="1">
    <location>
        <position position="42"/>
    </location>
</feature>
<feature type="binding site" evidence="1">
    <location>
        <begin position="13"/>
        <end position="19"/>
    </location>
    <ligand>
        <name>GTP</name>
        <dbReference type="ChEBI" id="CHEBI:37565"/>
    </ligand>
</feature>
<feature type="binding site" description="in other chain" evidence="1">
    <location>
        <begin position="14"/>
        <end position="17"/>
    </location>
    <ligand>
        <name>IMP</name>
        <dbReference type="ChEBI" id="CHEBI:58053"/>
        <note>ligand shared between dimeric partners</note>
    </ligand>
</feature>
<feature type="binding site" evidence="1">
    <location>
        <position position="14"/>
    </location>
    <ligand>
        <name>Mg(2+)</name>
        <dbReference type="ChEBI" id="CHEBI:18420"/>
    </ligand>
</feature>
<feature type="binding site" description="in other chain" evidence="1">
    <location>
        <begin position="39"/>
        <end position="42"/>
    </location>
    <ligand>
        <name>IMP</name>
        <dbReference type="ChEBI" id="CHEBI:58053"/>
        <note>ligand shared between dimeric partners</note>
    </ligand>
</feature>
<feature type="binding site" evidence="1">
    <location>
        <begin position="41"/>
        <end position="43"/>
    </location>
    <ligand>
        <name>GTP</name>
        <dbReference type="ChEBI" id="CHEBI:37565"/>
    </ligand>
</feature>
<feature type="binding site" evidence="1">
    <location>
        <position position="41"/>
    </location>
    <ligand>
        <name>Mg(2+)</name>
        <dbReference type="ChEBI" id="CHEBI:18420"/>
    </ligand>
</feature>
<feature type="binding site" description="in other chain" evidence="1">
    <location>
        <position position="130"/>
    </location>
    <ligand>
        <name>IMP</name>
        <dbReference type="ChEBI" id="CHEBI:58053"/>
        <note>ligand shared between dimeric partners</note>
    </ligand>
</feature>
<feature type="binding site" evidence="1">
    <location>
        <position position="144"/>
    </location>
    <ligand>
        <name>IMP</name>
        <dbReference type="ChEBI" id="CHEBI:58053"/>
        <note>ligand shared between dimeric partners</note>
    </ligand>
</feature>
<feature type="binding site" description="in other chain" evidence="1">
    <location>
        <position position="225"/>
    </location>
    <ligand>
        <name>IMP</name>
        <dbReference type="ChEBI" id="CHEBI:58053"/>
        <note>ligand shared between dimeric partners</note>
    </ligand>
</feature>
<feature type="binding site" description="in other chain" evidence="1">
    <location>
        <position position="240"/>
    </location>
    <ligand>
        <name>IMP</name>
        <dbReference type="ChEBI" id="CHEBI:58053"/>
        <note>ligand shared between dimeric partners</note>
    </ligand>
</feature>
<feature type="binding site" evidence="1">
    <location>
        <begin position="300"/>
        <end position="306"/>
    </location>
    <ligand>
        <name>substrate</name>
    </ligand>
</feature>
<feature type="binding site" description="in other chain" evidence="1">
    <location>
        <position position="304"/>
    </location>
    <ligand>
        <name>IMP</name>
        <dbReference type="ChEBI" id="CHEBI:58053"/>
        <note>ligand shared between dimeric partners</note>
    </ligand>
</feature>
<feature type="binding site" evidence="1">
    <location>
        <position position="306"/>
    </location>
    <ligand>
        <name>GTP</name>
        <dbReference type="ChEBI" id="CHEBI:37565"/>
    </ligand>
</feature>
<feature type="binding site" evidence="1">
    <location>
        <begin position="332"/>
        <end position="334"/>
    </location>
    <ligand>
        <name>GTP</name>
        <dbReference type="ChEBI" id="CHEBI:37565"/>
    </ligand>
</feature>
<feature type="binding site" evidence="1">
    <location>
        <begin position="415"/>
        <end position="417"/>
    </location>
    <ligand>
        <name>GTP</name>
        <dbReference type="ChEBI" id="CHEBI:37565"/>
    </ligand>
</feature>
<reference key="1">
    <citation type="journal article" date="2008" name="J. Bacteriol.">
        <title>The pangenome structure of Escherichia coli: comparative genomic analysis of E. coli commensal and pathogenic isolates.</title>
        <authorList>
            <person name="Rasko D.A."/>
            <person name="Rosovitz M.J."/>
            <person name="Myers G.S.A."/>
            <person name="Mongodin E.F."/>
            <person name="Fricke W.F."/>
            <person name="Gajer P."/>
            <person name="Crabtree J."/>
            <person name="Sebaihia M."/>
            <person name="Thomson N.R."/>
            <person name="Chaudhuri R."/>
            <person name="Henderson I.R."/>
            <person name="Sperandio V."/>
            <person name="Ravel J."/>
        </authorList>
    </citation>
    <scope>NUCLEOTIDE SEQUENCE [LARGE SCALE GENOMIC DNA]</scope>
    <source>
        <strain>E24377A / ETEC</strain>
    </source>
</reference>
<comment type="function">
    <text evidence="1">Plays an important role in the de novo pathway of purine nucleotide biosynthesis. Catalyzes the first committed step in the biosynthesis of AMP from IMP.</text>
</comment>
<comment type="catalytic activity">
    <reaction evidence="1">
        <text>IMP + L-aspartate + GTP = N(6)-(1,2-dicarboxyethyl)-AMP + GDP + phosphate + 2 H(+)</text>
        <dbReference type="Rhea" id="RHEA:15753"/>
        <dbReference type="ChEBI" id="CHEBI:15378"/>
        <dbReference type="ChEBI" id="CHEBI:29991"/>
        <dbReference type="ChEBI" id="CHEBI:37565"/>
        <dbReference type="ChEBI" id="CHEBI:43474"/>
        <dbReference type="ChEBI" id="CHEBI:57567"/>
        <dbReference type="ChEBI" id="CHEBI:58053"/>
        <dbReference type="ChEBI" id="CHEBI:58189"/>
        <dbReference type="EC" id="6.3.4.4"/>
    </reaction>
</comment>
<comment type="cofactor">
    <cofactor evidence="1">
        <name>Mg(2+)</name>
        <dbReference type="ChEBI" id="CHEBI:18420"/>
    </cofactor>
    <text evidence="1">Binds 1 Mg(2+) ion per subunit.</text>
</comment>
<comment type="pathway">
    <text evidence="1">Purine metabolism; AMP biosynthesis via de novo pathway; AMP from IMP: step 1/2.</text>
</comment>
<comment type="subunit">
    <text evidence="1">Homodimer.</text>
</comment>
<comment type="subcellular location">
    <subcellularLocation>
        <location evidence="1">Cytoplasm</location>
    </subcellularLocation>
</comment>
<comment type="similarity">
    <text evidence="1">Belongs to the adenylosuccinate synthetase family.</text>
</comment>
<protein>
    <recommendedName>
        <fullName evidence="1">Adenylosuccinate synthetase</fullName>
        <shortName evidence="1">AMPSase</shortName>
        <shortName evidence="1">AdSS</shortName>
        <ecNumber evidence="1">6.3.4.4</ecNumber>
    </recommendedName>
    <alternativeName>
        <fullName evidence="1">IMP--aspartate ligase</fullName>
    </alternativeName>
</protein>
<accession>A7ZV47</accession>
<proteinExistence type="inferred from homology"/>
<gene>
    <name evidence="1" type="primary">purA</name>
    <name type="ordered locus">EcE24377A_4736</name>
</gene>
<dbReference type="EC" id="6.3.4.4" evidence="1"/>
<dbReference type="EMBL" id="CP000800">
    <property type="protein sequence ID" value="ABV20894.1"/>
    <property type="molecule type" value="Genomic_DNA"/>
</dbReference>
<dbReference type="RefSeq" id="WP_000527955.1">
    <property type="nucleotide sequence ID" value="NC_009801.1"/>
</dbReference>
<dbReference type="SMR" id="A7ZV47"/>
<dbReference type="GeneID" id="75202411"/>
<dbReference type="KEGG" id="ecw:EcE24377A_4736"/>
<dbReference type="HOGENOM" id="CLU_029848_0_0_6"/>
<dbReference type="UniPathway" id="UPA00075">
    <property type="reaction ID" value="UER00335"/>
</dbReference>
<dbReference type="Proteomes" id="UP000001122">
    <property type="component" value="Chromosome"/>
</dbReference>
<dbReference type="GO" id="GO:0005737">
    <property type="term" value="C:cytoplasm"/>
    <property type="evidence" value="ECO:0007669"/>
    <property type="project" value="UniProtKB-SubCell"/>
</dbReference>
<dbReference type="GO" id="GO:0004019">
    <property type="term" value="F:adenylosuccinate synthase activity"/>
    <property type="evidence" value="ECO:0007669"/>
    <property type="project" value="UniProtKB-UniRule"/>
</dbReference>
<dbReference type="GO" id="GO:0005525">
    <property type="term" value="F:GTP binding"/>
    <property type="evidence" value="ECO:0007669"/>
    <property type="project" value="UniProtKB-UniRule"/>
</dbReference>
<dbReference type="GO" id="GO:0000287">
    <property type="term" value="F:magnesium ion binding"/>
    <property type="evidence" value="ECO:0007669"/>
    <property type="project" value="UniProtKB-UniRule"/>
</dbReference>
<dbReference type="GO" id="GO:0044208">
    <property type="term" value="P:'de novo' AMP biosynthetic process"/>
    <property type="evidence" value="ECO:0007669"/>
    <property type="project" value="UniProtKB-UniRule"/>
</dbReference>
<dbReference type="GO" id="GO:0046040">
    <property type="term" value="P:IMP metabolic process"/>
    <property type="evidence" value="ECO:0007669"/>
    <property type="project" value="TreeGrafter"/>
</dbReference>
<dbReference type="CDD" id="cd03108">
    <property type="entry name" value="AdSS"/>
    <property type="match status" value="1"/>
</dbReference>
<dbReference type="FunFam" id="1.10.300.10:FF:000001">
    <property type="entry name" value="Adenylosuccinate synthetase"/>
    <property type="match status" value="1"/>
</dbReference>
<dbReference type="FunFam" id="3.90.170.10:FF:000001">
    <property type="entry name" value="Adenylosuccinate synthetase"/>
    <property type="match status" value="1"/>
</dbReference>
<dbReference type="Gene3D" id="3.40.440.10">
    <property type="entry name" value="Adenylosuccinate Synthetase, subunit A, domain 1"/>
    <property type="match status" value="1"/>
</dbReference>
<dbReference type="Gene3D" id="1.10.300.10">
    <property type="entry name" value="Adenylosuccinate Synthetase, subunit A, domain 2"/>
    <property type="match status" value="1"/>
</dbReference>
<dbReference type="Gene3D" id="3.90.170.10">
    <property type="entry name" value="Adenylosuccinate Synthetase, subunit A, domain 3"/>
    <property type="match status" value="1"/>
</dbReference>
<dbReference type="HAMAP" id="MF_00011">
    <property type="entry name" value="Adenylosucc_synth"/>
    <property type="match status" value="1"/>
</dbReference>
<dbReference type="InterPro" id="IPR018220">
    <property type="entry name" value="Adenylosuccin_syn_GTP-bd"/>
</dbReference>
<dbReference type="InterPro" id="IPR033128">
    <property type="entry name" value="Adenylosuccin_syn_Lys_AS"/>
</dbReference>
<dbReference type="InterPro" id="IPR042109">
    <property type="entry name" value="Adenylosuccinate_synth_dom1"/>
</dbReference>
<dbReference type="InterPro" id="IPR042110">
    <property type="entry name" value="Adenylosuccinate_synth_dom2"/>
</dbReference>
<dbReference type="InterPro" id="IPR042111">
    <property type="entry name" value="Adenylosuccinate_synth_dom3"/>
</dbReference>
<dbReference type="InterPro" id="IPR001114">
    <property type="entry name" value="Adenylosuccinate_synthetase"/>
</dbReference>
<dbReference type="InterPro" id="IPR027417">
    <property type="entry name" value="P-loop_NTPase"/>
</dbReference>
<dbReference type="NCBIfam" id="NF002223">
    <property type="entry name" value="PRK01117.1"/>
    <property type="match status" value="1"/>
</dbReference>
<dbReference type="NCBIfam" id="TIGR00184">
    <property type="entry name" value="purA"/>
    <property type="match status" value="1"/>
</dbReference>
<dbReference type="PANTHER" id="PTHR11846">
    <property type="entry name" value="ADENYLOSUCCINATE SYNTHETASE"/>
    <property type="match status" value="1"/>
</dbReference>
<dbReference type="PANTHER" id="PTHR11846:SF0">
    <property type="entry name" value="ADENYLOSUCCINATE SYNTHETASE"/>
    <property type="match status" value="1"/>
</dbReference>
<dbReference type="Pfam" id="PF00709">
    <property type="entry name" value="Adenylsucc_synt"/>
    <property type="match status" value="1"/>
</dbReference>
<dbReference type="SMART" id="SM00788">
    <property type="entry name" value="Adenylsucc_synt"/>
    <property type="match status" value="1"/>
</dbReference>
<dbReference type="SUPFAM" id="SSF52540">
    <property type="entry name" value="P-loop containing nucleoside triphosphate hydrolases"/>
    <property type="match status" value="1"/>
</dbReference>
<dbReference type="PROSITE" id="PS01266">
    <property type="entry name" value="ADENYLOSUCCIN_SYN_1"/>
    <property type="match status" value="1"/>
</dbReference>
<dbReference type="PROSITE" id="PS00513">
    <property type="entry name" value="ADENYLOSUCCIN_SYN_2"/>
    <property type="match status" value="1"/>
</dbReference>
<evidence type="ECO:0000255" key="1">
    <source>
        <dbReference type="HAMAP-Rule" id="MF_00011"/>
    </source>
</evidence>
<sequence>MGNNVVVLGTQWGDEGKGKIVDLLTERAKYVVRYQGGHNAGHTLVINGEKTVLHLIPSGILRENVTSIIGNGVVLSPAALMKEMKELEDRGIPVRERLLLSEACPLILDYHVALDNAREKARGAKAIGTTGRGIGPAYEDKVARRGLRVGDLFDKETFAEKLKEVMEYHNFQLVNYYKAEAVDYQKVLDDTMAVADILTSMVVDVSDLLDQARQRGDFVMFEGAQGTLLDIDHGTYPYVTSSNTTAGGVATGSGLGPRYVDYVLGILKAYSTRVGAGPFPTELFDETGEFLCKQGNEFGATTGRRRRTGWLDTVAVRRAVQLNSLSGFCLTKLDVLDGLKEVKLCVAYRMPDGREVTTTPLAADDWKGVEPIYETMPGWSESTFGVKDRSGLPQAALNYIKRIEELTGVPIDIISTGPDRTETMILRDPFDA</sequence>
<name>PURA_ECO24</name>
<keyword id="KW-0963">Cytoplasm</keyword>
<keyword id="KW-0342">GTP-binding</keyword>
<keyword id="KW-0436">Ligase</keyword>
<keyword id="KW-0460">Magnesium</keyword>
<keyword id="KW-0479">Metal-binding</keyword>
<keyword id="KW-0547">Nucleotide-binding</keyword>
<keyword id="KW-0658">Purine biosynthesis</keyword>
<keyword id="KW-1185">Reference proteome</keyword>
<organism>
    <name type="scientific">Escherichia coli O139:H28 (strain E24377A / ETEC)</name>
    <dbReference type="NCBI Taxonomy" id="331111"/>
    <lineage>
        <taxon>Bacteria</taxon>
        <taxon>Pseudomonadati</taxon>
        <taxon>Pseudomonadota</taxon>
        <taxon>Gammaproteobacteria</taxon>
        <taxon>Enterobacterales</taxon>
        <taxon>Enterobacteriaceae</taxon>
        <taxon>Escherichia</taxon>
    </lineage>
</organism>